<dbReference type="EMBL" id="AB041543">
    <property type="protein sequence ID" value="BAA95028.1"/>
    <property type="molecule type" value="mRNA"/>
</dbReference>
<dbReference type="EMBL" id="AK173281">
    <property type="protein sequence ID" value="BAD32559.1"/>
    <property type="status" value="ALT_INIT"/>
    <property type="molecule type" value="mRNA"/>
</dbReference>
<dbReference type="EMBL" id="AC153815">
    <property type="status" value="NOT_ANNOTATED_CDS"/>
    <property type="molecule type" value="Genomic_DNA"/>
</dbReference>
<dbReference type="EMBL" id="BC066816">
    <property type="protein sequence ID" value="AAH66816.1"/>
    <property type="molecule type" value="mRNA"/>
</dbReference>
<dbReference type="CCDS" id="CCDS20102.1">
    <molecule id="Q6NXZ1-1"/>
</dbReference>
<dbReference type="CCDS" id="CCDS90043.1">
    <molecule id="Q6NXZ1-2"/>
</dbReference>
<dbReference type="RefSeq" id="NP_001349073.1">
    <molecule id="Q6NXZ1-1"/>
    <property type="nucleotide sequence ID" value="NM_001362144.1"/>
</dbReference>
<dbReference type="RefSeq" id="NP_001349074.1">
    <molecule id="Q6NXZ1-2"/>
    <property type="nucleotide sequence ID" value="NM_001362145.1"/>
</dbReference>
<dbReference type="RefSeq" id="NP_598683.3">
    <molecule id="Q6NXZ1-1"/>
    <property type="nucleotide sequence ID" value="NM_133922.3"/>
</dbReference>
<dbReference type="RefSeq" id="XP_006506827.1">
    <property type="nucleotide sequence ID" value="XM_006506764.3"/>
</dbReference>
<dbReference type="SMR" id="Q6NXZ1"/>
<dbReference type="BioGRID" id="218953">
    <property type="interactions" value="2"/>
</dbReference>
<dbReference type="FunCoup" id="Q6NXZ1">
    <property type="interactions" value="36"/>
</dbReference>
<dbReference type="IntAct" id="Q6NXZ1">
    <property type="interactions" value="2"/>
</dbReference>
<dbReference type="STRING" id="10090.ENSMUSP00000110219"/>
<dbReference type="GlyGen" id="Q6NXZ1">
    <property type="glycosylation" value="4 sites, 1 O-linked glycan (3 sites)"/>
</dbReference>
<dbReference type="iPTMnet" id="Q6NXZ1"/>
<dbReference type="PhosphoSitePlus" id="Q6NXZ1"/>
<dbReference type="PaxDb" id="10090-ENSMUSP00000110219"/>
<dbReference type="ProteomicsDB" id="263460">
    <molecule id="Q6NXZ1-1"/>
</dbReference>
<dbReference type="ProteomicsDB" id="263461">
    <molecule id="Q6NXZ1-2"/>
</dbReference>
<dbReference type="Antibodypedia" id="10441">
    <property type="antibodies" value="13 antibodies from 8 providers"/>
</dbReference>
<dbReference type="DNASU" id="77827"/>
<dbReference type="Ensembl" id="ENSMUST00000031815.12">
    <molecule id="Q6NXZ1-2"/>
    <property type="protein sequence ID" value="ENSMUSP00000031815.6"/>
    <property type="gene ID" value="ENSMUSG00000042810.15"/>
</dbReference>
<dbReference type="Ensembl" id="ENSMUST00000077093.7">
    <molecule id="Q6NXZ1-1"/>
    <property type="protein sequence ID" value="ENSMUSP00000076345.6"/>
    <property type="gene ID" value="ENSMUSG00000042810.15"/>
</dbReference>
<dbReference type="Ensembl" id="ENSMUST00000114571.8">
    <molecule id="Q6NXZ1-1"/>
    <property type="protein sequence ID" value="ENSMUSP00000110218.3"/>
    <property type="gene ID" value="ENSMUSG00000042810.15"/>
</dbReference>
<dbReference type="GeneID" id="77827"/>
<dbReference type="KEGG" id="mmu:77827"/>
<dbReference type="UCSC" id="uc009bty.2">
    <molecule id="Q6NXZ1-1"/>
    <property type="organism name" value="mouse"/>
</dbReference>
<dbReference type="UCSC" id="uc009bub.2">
    <molecule id="Q6NXZ1-2"/>
    <property type="organism name" value="mouse"/>
</dbReference>
<dbReference type="AGR" id="MGI:1925077"/>
<dbReference type="CTD" id="84626"/>
<dbReference type="MGI" id="MGI:1925077">
    <property type="gene designation" value="Krba1"/>
</dbReference>
<dbReference type="VEuPathDB" id="HostDB:ENSMUSG00000042810"/>
<dbReference type="eggNOG" id="ENOG502S92J">
    <property type="taxonomic scope" value="Eukaryota"/>
</dbReference>
<dbReference type="GeneTree" id="ENSGT00390000006211"/>
<dbReference type="HOGENOM" id="CLU_299337_0_0_1"/>
<dbReference type="InParanoid" id="Q6NXZ1"/>
<dbReference type="OMA" id="TCHQRGL"/>
<dbReference type="OrthoDB" id="9449942at2759"/>
<dbReference type="PhylomeDB" id="Q6NXZ1"/>
<dbReference type="TreeFam" id="TF337281"/>
<dbReference type="Reactome" id="R-MMU-212436">
    <property type="pathway name" value="Generic Transcription Pathway"/>
</dbReference>
<dbReference type="BioGRID-ORCS" id="77827">
    <property type="hits" value="3 hits in 78 CRISPR screens"/>
</dbReference>
<dbReference type="ChiTaRS" id="Krba1">
    <property type="organism name" value="mouse"/>
</dbReference>
<dbReference type="PRO" id="PR:Q6NXZ1"/>
<dbReference type="Proteomes" id="UP000000589">
    <property type="component" value="Chromosome 6"/>
</dbReference>
<dbReference type="RNAct" id="Q6NXZ1">
    <property type="molecule type" value="protein"/>
</dbReference>
<dbReference type="Bgee" id="ENSMUSG00000042810">
    <property type="expression patterns" value="Expressed in spermatocyte and 225 other cell types or tissues"/>
</dbReference>
<dbReference type="ExpressionAtlas" id="Q6NXZ1">
    <property type="expression patterns" value="baseline and differential"/>
</dbReference>
<dbReference type="InterPro" id="IPR040095">
    <property type="entry name" value="KRBA1"/>
</dbReference>
<dbReference type="InterPro" id="IPR029317">
    <property type="entry name" value="KRBA1_rpt"/>
</dbReference>
<dbReference type="PANTHER" id="PTHR22740">
    <property type="entry name" value="PROTEIN KRBA1"/>
    <property type="match status" value="1"/>
</dbReference>
<dbReference type="PANTHER" id="PTHR22740:SF3">
    <property type="entry name" value="PROTEIN KRBA1"/>
    <property type="match status" value="1"/>
</dbReference>
<dbReference type="Pfam" id="PF15287">
    <property type="entry name" value="KRBA1"/>
    <property type="match status" value="5"/>
</dbReference>
<dbReference type="SMART" id="SM01258">
    <property type="entry name" value="KRBA1"/>
    <property type="match status" value="6"/>
</dbReference>
<reference key="1">
    <citation type="submission" date="2000-04" db="EMBL/GenBank/DDBJ databases">
        <title>Isolation of full-length cDNA clones from mouse brain cDNA library made by oligo-capping method.</title>
        <authorList>
            <person name="Osada N."/>
            <person name="Kusuda J."/>
            <person name="Tanuma R."/>
            <person name="Ito A."/>
            <person name="Hirata M."/>
            <person name="Sugano S."/>
            <person name="Hashimoto K."/>
        </authorList>
    </citation>
    <scope>NUCLEOTIDE SEQUENCE [LARGE SCALE MRNA] (ISOFORM 2)</scope>
    <source>
        <strain>C57BL/6J</strain>
        <tissue>Brain</tissue>
    </source>
</reference>
<reference key="2">
    <citation type="journal article" date="2004" name="DNA Res.">
        <title>Prediction of the coding sequences of mouse homologues of KIAA gene: IV. The complete nucleotide sequences of 500 mouse KIAA-homologous cDNAs identified by screening of terminal sequences of cDNA clones randomly sampled from size-fractionated libraries.</title>
        <authorList>
            <person name="Okazaki N."/>
            <person name="Kikuno R."/>
            <person name="Ohara R."/>
            <person name="Inamoto S."/>
            <person name="Koseki H."/>
            <person name="Hiraoka S."/>
            <person name="Saga Y."/>
            <person name="Seino S."/>
            <person name="Nishimura M."/>
            <person name="Kaisho T."/>
            <person name="Hoshino K."/>
            <person name="Kitamura H."/>
            <person name="Nagase T."/>
            <person name="Ohara O."/>
            <person name="Koga H."/>
        </authorList>
    </citation>
    <scope>NUCLEOTIDE SEQUENCE [LARGE SCALE MRNA] (ISOFORM 1)</scope>
    <source>
        <tissue>Brain</tissue>
    </source>
</reference>
<reference key="3">
    <citation type="journal article" date="2009" name="PLoS Biol.">
        <title>Lineage-specific biology revealed by a finished genome assembly of the mouse.</title>
        <authorList>
            <person name="Church D.M."/>
            <person name="Goodstadt L."/>
            <person name="Hillier L.W."/>
            <person name="Zody M.C."/>
            <person name="Goldstein S."/>
            <person name="She X."/>
            <person name="Bult C.J."/>
            <person name="Agarwala R."/>
            <person name="Cherry J.L."/>
            <person name="DiCuccio M."/>
            <person name="Hlavina W."/>
            <person name="Kapustin Y."/>
            <person name="Meric P."/>
            <person name="Maglott D."/>
            <person name="Birtle Z."/>
            <person name="Marques A.C."/>
            <person name="Graves T."/>
            <person name="Zhou S."/>
            <person name="Teague B."/>
            <person name="Potamousis K."/>
            <person name="Churas C."/>
            <person name="Place M."/>
            <person name="Herschleb J."/>
            <person name="Runnheim R."/>
            <person name="Forrest D."/>
            <person name="Amos-Landgraf J."/>
            <person name="Schwartz D.C."/>
            <person name="Cheng Z."/>
            <person name="Lindblad-Toh K."/>
            <person name="Eichler E.E."/>
            <person name="Ponting C.P."/>
        </authorList>
    </citation>
    <scope>NUCLEOTIDE SEQUENCE [LARGE SCALE GENOMIC DNA]</scope>
    <source>
        <strain>C57BL/6J</strain>
    </source>
</reference>
<reference key="4">
    <citation type="journal article" date="2004" name="Genome Res.">
        <title>The status, quality, and expansion of the NIH full-length cDNA project: the Mammalian Gene Collection (MGC).</title>
        <authorList>
            <consortium name="The MGC Project Team"/>
        </authorList>
    </citation>
    <scope>NUCLEOTIDE SEQUENCE [LARGE SCALE MRNA] (ISOFORM 1)</scope>
    <source>
        <strain>CD-1</strain>
        <tissue>Neural stem cell</tissue>
    </source>
</reference>
<keyword id="KW-0025">Alternative splicing</keyword>
<keyword id="KW-0175">Coiled coil</keyword>
<keyword id="KW-0597">Phosphoprotein</keyword>
<keyword id="KW-1185">Reference proteome</keyword>
<feature type="chain" id="PRO_0000300112" description="Protein KRBA1">
    <location>
        <begin position="1"/>
        <end position="1043"/>
    </location>
</feature>
<feature type="region of interest" description="Disordered" evidence="3">
    <location>
        <begin position="26"/>
        <end position="56"/>
    </location>
</feature>
<feature type="region of interest" description="Disordered" evidence="3">
    <location>
        <begin position="113"/>
        <end position="186"/>
    </location>
</feature>
<feature type="region of interest" description="Disordered" evidence="3">
    <location>
        <begin position="279"/>
        <end position="321"/>
    </location>
</feature>
<feature type="region of interest" description="Disordered" evidence="3">
    <location>
        <begin position="413"/>
        <end position="497"/>
    </location>
</feature>
<feature type="region of interest" description="Disordered" evidence="3">
    <location>
        <begin position="528"/>
        <end position="590"/>
    </location>
</feature>
<feature type="region of interest" description="Disordered" evidence="3">
    <location>
        <begin position="621"/>
        <end position="816"/>
    </location>
</feature>
<feature type="region of interest" description="Disordered" evidence="3">
    <location>
        <begin position="910"/>
        <end position="929"/>
    </location>
</feature>
<feature type="region of interest" description="Disordered" evidence="3">
    <location>
        <begin position="1010"/>
        <end position="1043"/>
    </location>
</feature>
<feature type="coiled-coil region" evidence="2">
    <location>
        <begin position="825"/>
        <end position="858"/>
    </location>
</feature>
<feature type="compositionally biased region" description="Basic and acidic residues" evidence="3">
    <location>
        <begin position="36"/>
        <end position="50"/>
    </location>
</feature>
<feature type="compositionally biased region" description="Low complexity" evidence="3">
    <location>
        <begin position="126"/>
        <end position="139"/>
    </location>
</feature>
<feature type="compositionally biased region" description="Basic and acidic residues" evidence="3">
    <location>
        <begin position="156"/>
        <end position="167"/>
    </location>
</feature>
<feature type="compositionally biased region" description="Polar residues" evidence="3">
    <location>
        <begin position="172"/>
        <end position="186"/>
    </location>
</feature>
<feature type="compositionally biased region" description="Basic and acidic residues" evidence="3">
    <location>
        <begin position="528"/>
        <end position="551"/>
    </location>
</feature>
<feature type="compositionally biased region" description="Polar residues" evidence="3">
    <location>
        <begin position="566"/>
        <end position="590"/>
    </location>
</feature>
<feature type="compositionally biased region" description="Low complexity" evidence="3">
    <location>
        <begin position="630"/>
        <end position="639"/>
    </location>
</feature>
<feature type="compositionally biased region" description="Basic and acidic residues" evidence="3">
    <location>
        <begin position="687"/>
        <end position="697"/>
    </location>
</feature>
<feature type="compositionally biased region" description="Basic and acidic residues" evidence="3">
    <location>
        <begin position="705"/>
        <end position="723"/>
    </location>
</feature>
<feature type="compositionally biased region" description="Basic and acidic residues" evidence="3">
    <location>
        <begin position="747"/>
        <end position="766"/>
    </location>
</feature>
<feature type="compositionally biased region" description="Polar residues" evidence="3">
    <location>
        <begin position="788"/>
        <end position="805"/>
    </location>
</feature>
<feature type="compositionally biased region" description="Basic and acidic residues" evidence="3">
    <location>
        <begin position="1031"/>
        <end position="1043"/>
    </location>
</feature>
<feature type="modified residue" description="Phosphoserine" evidence="1">
    <location>
        <position position="99"/>
    </location>
</feature>
<feature type="modified residue" description="Phosphoserine" evidence="1">
    <location>
        <position position="181"/>
    </location>
</feature>
<feature type="modified residue" description="Phosphoserine" evidence="1">
    <location>
        <position position="252"/>
    </location>
</feature>
<feature type="modified residue" description="Phosphoserine" evidence="1">
    <location>
        <position position="352"/>
    </location>
</feature>
<feature type="splice variant" id="VSP_027781" description="In isoform 2." evidence="4">
    <original>MRENYETLVSV</original>
    <variation>MRSARPTQTSQLCGSRCSEFPGPASCRAELGRCPRGSRGSRCSLQPEPHRKLGGPGSREAEFRHGAP</variation>
    <location>
        <begin position="1"/>
        <end position="11"/>
    </location>
</feature>
<feature type="splice variant" id="VSP_027782" description="In isoform 2." evidence="4">
    <original>IG</original>
    <variation>R</variation>
    <location>
        <begin position="154"/>
        <end position="155"/>
    </location>
</feature>
<feature type="splice variant" id="VSP_027783" description="In isoform 2." evidence="4">
    <location>
        <begin position="307"/>
        <end position="372"/>
    </location>
</feature>
<feature type="sequence conflict" description="In Ref. 2; BAD32559 and 4; AAH66816." evidence="5" ref="2 4">
    <original>N</original>
    <variation>S</variation>
    <location>
        <position position="116"/>
    </location>
</feature>
<feature type="sequence conflict" description="In Ref. 4; AAH66816." evidence="5" ref="4">
    <original>L</original>
    <variation>P</variation>
    <location>
        <position position="388"/>
    </location>
</feature>
<feature type="sequence conflict" description="In Ref. 1; BAA95028." evidence="5" ref="1">
    <original>I</original>
    <variation>F</variation>
    <location>
        <position position="508"/>
    </location>
</feature>
<protein>
    <recommendedName>
        <fullName>Protein KRBA1</fullName>
    </recommendedName>
</protein>
<proteinExistence type="evidence at transcript level"/>
<sequence>MRENYETLVSVGTSELLPLSAFLSPAEAGGATSGESHQDKGQKPHLEHSSQGEQPQQSLHLTALVQLVKEIPEFLFGEVKGTEDYSESGSTSLDGEQTSPEVAVVVEACPPRGLLNSLPESPASHPSLATTPTGSSTSGGPPGDWAHGSPLPAIGTDDKPLSIEKEGVGASRETSIHSTQSLGQSKSYLRQERGSMGTGTLPENSPLQGLINCLKEILVPRPQHRGTAPDLPPSLPGLSVLKQTRAEVEAGSLPCPVKTEAASGDCPLQGLLNCLKEIPKAPDRRPSPSGASDLQLQEDPGKRHSGGMRHLQTPPHPSHEAGSMLATVKVEDGWAQSPPVPASCQLSRQGYSSYSTGDNREVRVPRWGPMTLASRASSSPLEALEACLKGIPPGGSSPLQSLAISWSRSPQLGDAGSQRFELQQQGSHSEEATREPLLPLSLQGYMREGPGVQPCGSQGTPTSFSSASSSDGDLDFRSPRSSQGQRLGKGYLPGNSPLQGLENCLREIPIPRPQAAWPCSSAVNRGLKRTEPRNWTGDREGLRGEASEPPHLRQRPGEVPSRSLHQDSPQTCTSTCHQVTTRPGTWQWPQEETATMPSPLHRLENSLRGILPVRPLRFTCVTGPGPSPSPCSSSSFSSSDGEDLRPEPAFWQSPLQQKDQPPSCKDPVRLCPVSGASPRVNSNSCSAEDRERTEPRDCSSLSAGRAEEKPHPPRREDGAERTRQPGPVTNAEGKGAAAGHPSPAPQLEEKPEPKGTEDSRDLEPGHRPPSAAARTQGKLLSGDPPESPSKSPLPTTVLSKWSPTSLQPPCPCGRSLQQELHNLGTALTDKLDRLAAALAGLTQEVATMKTQMDQLRRHPRSLGPKGQGSWQLALPQRPRWVNRLGHRHLPYWRQKGPTRPRPKILRTQAEGCKTSDRPGLSRGKGSLVPQLPPEASLVESSRPTCSSSQQISSTPGGHTVLTAHPPLEHTACHQNPLSPSVPTSVQVPLVASPATSADTEPPAARVAAISIPNQPKEPDSLLGEALSRDLWGGDHRDPRWGAH</sequence>
<organism>
    <name type="scientific">Mus musculus</name>
    <name type="common">Mouse</name>
    <dbReference type="NCBI Taxonomy" id="10090"/>
    <lineage>
        <taxon>Eukaryota</taxon>
        <taxon>Metazoa</taxon>
        <taxon>Chordata</taxon>
        <taxon>Craniata</taxon>
        <taxon>Vertebrata</taxon>
        <taxon>Euteleostomi</taxon>
        <taxon>Mammalia</taxon>
        <taxon>Eutheria</taxon>
        <taxon>Euarchontoglires</taxon>
        <taxon>Glires</taxon>
        <taxon>Rodentia</taxon>
        <taxon>Myomorpha</taxon>
        <taxon>Muroidea</taxon>
        <taxon>Muridae</taxon>
        <taxon>Murinae</taxon>
        <taxon>Mus</taxon>
        <taxon>Mus</taxon>
    </lineage>
</organism>
<accession>Q6NXZ1</accession>
<accession>E9QNG7</accession>
<accession>Q69Z85</accession>
<accession>Q9JJG3</accession>
<evidence type="ECO:0000250" key="1">
    <source>
        <dbReference type="UniProtKB" id="A5PL33"/>
    </source>
</evidence>
<evidence type="ECO:0000255" key="2"/>
<evidence type="ECO:0000256" key="3">
    <source>
        <dbReference type="SAM" id="MobiDB-lite"/>
    </source>
</evidence>
<evidence type="ECO:0000303" key="4">
    <source ref="1"/>
</evidence>
<evidence type="ECO:0000305" key="5"/>
<name>KRBA1_MOUSE</name>
<gene>
    <name type="primary">Krba1</name>
    <name type="synonym">Kiaa1862</name>
    <name type="ORF">MNCb-1826</name>
</gene>
<comment type="alternative products">
    <event type="alternative splicing"/>
    <isoform>
        <id>Q6NXZ1-1</id>
        <name>1</name>
        <sequence type="displayed"/>
    </isoform>
    <isoform>
        <id>Q6NXZ1-2</id>
        <name>2</name>
        <sequence type="described" ref="VSP_027781 VSP_027782 VSP_027783"/>
    </isoform>
</comment>
<comment type="sequence caution" evidence="5">
    <conflict type="erroneous initiation">
        <sequence resource="EMBL-CDS" id="BAD32559"/>
    </conflict>
</comment>